<comment type="function">
    <text evidence="1">Member of the two-component regulatory system CitT/CitS.</text>
</comment>
<comment type="subcellular location">
    <subcellularLocation>
        <location evidence="4">Cytoplasm</location>
    </subcellularLocation>
</comment>
<comment type="PTM">
    <text evidence="1">Phosphorylated by CitS.</text>
</comment>
<protein>
    <recommendedName>
        <fullName>Transcriptional regulatory protein CitT</fullName>
    </recommendedName>
</protein>
<feature type="chain" id="PRO_0000081073" description="Transcriptional regulatory protein CitT">
    <location>
        <begin position="1"/>
        <end position="230"/>
    </location>
</feature>
<feature type="domain" description="Response regulatory" evidence="3">
    <location>
        <begin position="6"/>
        <end position="124"/>
    </location>
</feature>
<feature type="DNA-binding region" description="H-T-H motif" evidence="2">
    <location>
        <begin position="184"/>
        <end position="203"/>
    </location>
</feature>
<feature type="modified residue" description="4-aspartylphosphate" evidence="3">
    <location>
        <position position="59"/>
    </location>
</feature>
<accession>Q9RC52</accession>
<organism>
    <name type="scientific">Halalkalibacterium halodurans (strain ATCC BAA-125 / DSM 18197 / FERM 7344 / JCM 9153 / C-125)</name>
    <name type="common">Bacillus halodurans</name>
    <dbReference type="NCBI Taxonomy" id="272558"/>
    <lineage>
        <taxon>Bacteria</taxon>
        <taxon>Bacillati</taxon>
        <taxon>Bacillota</taxon>
        <taxon>Bacilli</taxon>
        <taxon>Bacillales</taxon>
        <taxon>Bacillaceae</taxon>
        <taxon>Halalkalibacterium (ex Joshi et al. 2022)</taxon>
    </lineage>
</organism>
<sequence length="230" mass="26482">MTKLYKVLIIEDDFRVAQIQEQMVNDHPYFHVISTCRTGGEALDYLSEKAAALDLILLDVYIPDVKGLELLWAIREKFRDVDIMMVTAAKEVDTVQEALRGGIIDYLLKPVQKEVLHQRLDAYVQKRELFGERRQVSQEELDQLRQVQVRVQVGETPLPKGIDRLTLEKVVNALEEAETQGLTAMEGARLIGASRSTVRRYFEYLIHTKKAKAEVNYGDVGRPERRYFLC</sequence>
<gene>
    <name type="primary">citT</name>
    <name type="ordered locus">BH3838</name>
</gene>
<keyword id="KW-0010">Activator</keyword>
<keyword id="KW-0963">Cytoplasm</keyword>
<keyword id="KW-0238">DNA-binding</keyword>
<keyword id="KW-0597">Phosphoprotein</keyword>
<keyword id="KW-1185">Reference proteome</keyword>
<keyword id="KW-0804">Transcription</keyword>
<keyword id="KW-0805">Transcription regulation</keyword>
<keyword id="KW-0902">Two-component regulatory system</keyword>
<proteinExistence type="inferred from homology"/>
<name>CITT_HALH5</name>
<dbReference type="EMBL" id="AB024561">
    <property type="protein sequence ID" value="BAA83947.1"/>
    <property type="molecule type" value="Genomic_DNA"/>
</dbReference>
<dbReference type="EMBL" id="BA000004">
    <property type="protein sequence ID" value="BAB07557.1"/>
    <property type="molecule type" value="Genomic_DNA"/>
</dbReference>
<dbReference type="PIR" id="F84129">
    <property type="entry name" value="F84129"/>
</dbReference>
<dbReference type="RefSeq" id="WP_010899963.1">
    <property type="nucleotide sequence ID" value="NC_002570.2"/>
</dbReference>
<dbReference type="SMR" id="Q9RC52"/>
<dbReference type="STRING" id="272558.gene:10729751"/>
<dbReference type="KEGG" id="bha:BH3838"/>
<dbReference type="eggNOG" id="COG4565">
    <property type="taxonomic scope" value="Bacteria"/>
</dbReference>
<dbReference type="HOGENOM" id="CLU_000445_39_0_9"/>
<dbReference type="OrthoDB" id="9759232at2"/>
<dbReference type="Proteomes" id="UP000001258">
    <property type="component" value="Chromosome"/>
</dbReference>
<dbReference type="GO" id="GO:0005737">
    <property type="term" value="C:cytoplasm"/>
    <property type="evidence" value="ECO:0007669"/>
    <property type="project" value="UniProtKB-SubCell"/>
</dbReference>
<dbReference type="GO" id="GO:0003677">
    <property type="term" value="F:DNA binding"/>
    <property type="evidence" value="ECO:0007669"/>
    <property type="project" value="UniProtKB-KW"/>
</dbReference>
<dbReference type="GO" id="GO:0003700">
    <property type="term" value="F:DNA-binding transcription factor activity"/>
    <property type="evidence" value="ECO:0007669"/>
    <property type="project" value="InterPro"/>
</dbReference>
<dbReference type="GO" id="GO:0000156">
    <property type="term" value="F:phosphorelay response regulator activity"/>
    <property type="evidence" value="ECO:0007669"/>
    <property type="project" value="TreeGrafter"/>
</dbReference>
<dbReference type="CDD" id="cd19925">
    <property type="entry name" value="REC_citrate_TCS"/>
    <property type="match status" value="1"/>
</dbReference>
<dbReference type="Gene3D" id="3.40.50.2300">
    <property type="match status" value="1"/>
</dbReference>
<dbReference type="InterPro" id="IPR051271">
    <property type="entry name" value="2C-system_Tx_regulators"/>
</dbReference>
<dbReference type="InterPro" id="IPR011006">
    <property type="entry name" value="CheY-like_superfamily"/>
</dbReference>
<dbReference type="InterPro" id="IPR048714">
    <property type="entry name" value="DpiA-like_HTH"/>
</dbReference>
<dbReference type="InterPro" id="IPR024187">
    <property type="entry name" value="Sig_transdc_resp-reg_cit/mal"/>
</dbReference>
<dbReference type="InterPro" id="IPR001789">
    <property type="entry name" value="Sig_transdc_resp-reg_receiver"/>
</dbReference>
<dbReference type="PANTHER" id="PTHR45526:SF6">
    <property type="entry name" value="TRANSCRIPTIONAL REGULATORY PROTEIN CITT"/>
    <property type="match status" value="1"/>
</dbReference>
<dbReference type="PANTHER" id="PTHR45526">
    <property type="entry name" value="TRANSCRIPTIONAL REGULATORY PROTEIN DPIA"/>
    <property type="match status" value="1"/>
</dbReference>
<dbReference type="Pfam" id="PF20714">
    <property type="entry name" value="HTH_64"/>
    <property type="match status" value="1"/>
</dbReference>
<dbReference type="Pfam" id="PF00072">
    <property type="entry name" value="Response_reg"/>
    <property type="match status" value="1"/>
</dbReference>
<dbReference type="PIRSF" id="PIRSF006171">
    <property type="entry name" value="RR_citrat_malat"/>
    <property type="match status" value="1"/>
</dbReference>
<dbReference type="SMART" id="SM00448">
    <property type="entry name" value="REC"/>
    <property type="match status" value="1"/>
</dbReference>
<dbReference type="SUPFAM" id="SSF52172">
    <property type="entry name" value="CheY-like"/>
    <property type="match status" value="1"/>
</dbReference>
<dbReference type="PROSITE" id="PS50110">
    <property type="entry name" value="RESPONSE_REGULATORY"/>
    <property type="match status" value="1"/>
</dbReference>
<reference key="1">
    <citation type="journal article" date="1999" name="Extremophiles">
        <title>Genetic analysis of the chromosome of alkaliphilic Bacillus halodurans C-125.</title>
        <authorList>
            <person name="Takami H."/>
            <person name="Takaki Y."/>
            <person name="Nakasone K."/>
            <person name="Sakiyama T."/>
            <person name="Maeno G."/>
            <person name="Sasaki R."/>
            <person name="Hirama C."/>
            <person name="Fuji F."/>
            <person name="Masui N."/>
        </authorList>
    </citation>
    <scope>NUCLEOTIDE SEQUENCE [GENOMIC DNA]</scope>
    <source>
        <strain>ATCC BAA-125 / DSM 18197 / FERM 7344 / JCM 9153 / C-125</strain>
    </source>
</reference>
<reference key="2">
    <citation type="journal article" date="2000" name="Nucleic Acids Res.">
        <title>Complete genome sequence of the alkaliphilic bacterium Bacillus halodurans and genomic sequence comparison with Bacillus subtilis.</title>
        <authorList>
            <person name="Takami H."/>
            <person name="Nakasone K."/>
            <person name="Takaki Y."/>
            <person name="Maeno G."/>
            <person name="Sasaki R."/>
            <person name="Masui N."/>
            <person name="Fuji F."/>
            <person name="Hirama C."/>
            <person name="Nakamura Y."/>
            <person name="Ogasawara N."/>
            <person name="Kuhara S."/>
            <person name="Horikoshi K."/>
        </authorList>
    </citation>
    <scope>NUCLEOTIDE SEQUENCE [LARGE SCALE GENOMIC DNA]</scope>
    <source>
        <strain>ATCC BAA-125 / DSM 18197 / FERM 7344 / JCM 9153 / C-125</strain>
    </source>
</reference>
<evidence type="ECO:0000250" key="1"/>
<evidence type="ECO:0000255" key="2"/>
<evidence type="ECO:0000255" key="3">
    <source>
        <dbReference type="PROSITE-ProRule" id="PRU00169"/>
    </source>
</evidence>
<evidence type="ECO:0000305" key="4"/>